<reference key="1">
    <citation type="journal article" date="1985" name="Gene">
        <title>Cloning, sequencing and transcription of an inactivated copy of Bacillus amyloliquefaciens extracellular ribonuclease (barnase).</title>
        <authorList>
            <person name="Paddon C.J."/>
            <person name="Hartley R.W."/>
        </authorList>
    </citation>
    <scope>NUCLEOTIDE SEQUENCE [GENOMIC DNA]</scope>
</reference>
<reference key="2">
    <citation type="journal article" date="1988" name="J. Mol. Biol.">
        <title>Barnase and barstar. Expression of its cloned inhibitor permits expression of a cloned ribonuclease.</title>
        <authorList>
            <person name="Hartley R.W."/>
        </authorList>
    </citation>
    <scope>NUCLEOTIDE SEQUENCE [GENOMIC DNA] OF 48-157</scope>
</reference>
<reference key="3">
    <citation type="journal article" date="1972" name="Nature New Biol.">
        <title>Amino-acid sequence of extracellular ribonuclease (barnase) of Bacillus amyloliquefaciens.</title>
        <authorList>
            <person name="Hartley R.W."/>
            <person name="Barker E.A."/>
        </authorList>
    </citation>
    <scope>PROTEIN SEQUENCE OF 48-157</scope>
</reference>
<reference key="4">
    <citation type="journal article" date="1991" name="Biochemistry">
        <title>Determination of the three-dimensional solution structure of barnase using nuclear magnetic resonance spectroscopy.</title>
        <authorList>
            <person name="Bycroft M."/>
            <person name="Ludvigsen S."/>
            <person name="Fersht A.R."/>
            <person name="Poulsen F.M."/>
        </authorList>
    </citation>
    <scope>STRUCTURE BY NMR</scope>
</reference>
<reference key="5">
    <citation type="journal article" date="1992" name="J. Mol. Biol.">
        <title>An N-terminal fragment of barnase has residual helical structure similar to that in a refolding intermediate.</title>
        <authorList>
            <person name="Sancho J."/>
            <person name="Neira J.L."/>
            <person name="Fersht A.R."/>
        </authorList>
    </citation>
    <scope>STRUCTURE BY NMR OF 48-83</scope>
</reference>
<reference key="6">
    <citation type="journal article" date="1998" name="FEBS Lett.">
        <title>Three-dimensional structure of binase in solution.</title>
        <authorList>
            <person name="Reibarkh M.Y.A."/>
            <person name="Nolde D.E."/>
            <person name="Vasilieva L.I."/>
            <person name="Bocharov E.V."/>
            <person name="Shulga A.A."/>
            <person name="Kirpichnikov M.P."/>
            <person name="Arseniev A.S."/>
        </authorList>
    </citation>
    <scope>STRUCTURE BY NMR OF 48-157</scope>
</reference>
<reference key="7">
    <citation type="journal article" date="1991" name="J. Mol. Biol.">
        <title>Crystal structure of a barnase-d(GpC) complex at 1.9-A resolution.</title>
        <authorList>
            <person name="Baudet S."/>
            <person name="Janin J."/>
        </authorList>
    </citation>
    <scope>X-RAY CRYSTALLOGRAPHY (1.9 ANGSTROMS)</scope>
</reference>
<reference key="8">
    <citation type="journal article" date="1993" name="Structure">
        <title>Recognition between a bacterial ribonuclease, barnase, and its natural inhibitor, barstar.</title>
        <authorList>
            <person name="Guillet V."/>
            <person name="Lapthorn A."/>
            <person name="Hartley R.W."/>
            <person name="Mauguen Y."/>
        </authorList>
    </citation>
    <scope>X-RAY CRYSTALLOGRAPHY (2.6 ANGSTROMS) OF COMPLEX WITH BARNASE</scope>
</reference>
<reference key="9">
    <citation type="journal article" date="2002" name="Acta Crystallogr. D">
        <title>A structural double-mutant cycle: estimating the strength of a buried salt bridge in barnase.</title>
        <authorList>
            <person name="Vaughan C.K."/>
            <person name="Harryson P."/>
            <person name="Buckle A.M."/>
            <person name="Fersht A.R."/>
        </authorList>
    </citation>
    <scope>X-RAY CRYSTALLOGRAPHY (1.7 ANGSTROMS)</scope>
</reference>
<reference key="10">
    <citation type="journal article" date="1989" name="Trends Biochem. Sci.">
        <title>Barnase and barstar: two small proteins to fold and fit together.</title>
        <authorList>
            <person name="Hartley R.W."/>
        </authorList>
    </citation>
    <scope>REVIEW</scope>
</reference>
<dbReference type="EC" id="3.1.27.-"/>
<dbReference type="EMBL" id="M14442">
    <property type="protein sequence ID" value="AAA86441.1"/>
    <property type="molecule type" value="Genomic_DNA"/>
</dbReference>
<dbReference type="EMBL" id="X12871">
    <property type="protein sequence ID" value="CAA31365.1"/>
    <property type="molecule type" value="Genomic_DNA"/>
</dbReference>
<dbReference type="PIR" id="A24038">
    <property type="entry name" value="NRBSN"/>
</dbReference>
<dbReference type="PDB" id="1A2P">
    <property type="method" value="X-ray"/>
    <property type="resolution" value="1.50 A"/>
    <property type="chains" value="A/B/C=48-157"/>
</dbReference>
<dbReference type="PDB" id="1B20">
    <property type="method" value="X-ray"/>
    <property type="resolution" value="1.70 A"/>
    <property type="chains" value="A/B/C=48-157"/>
</dbReference>
<dbReference type="PDB" id="1B21">
    <property type="method" value="X-ray"/>
    <property type="resolution" value="2.00 A"/>
    <property type="chains" value="A/B/C=48-157"/>
</dbReference>
<dbReference type="PDB" id="1B27">
    <property type="method" value="X-ray"/>
    <property type="resolution" value="2.10 A"/>
    <property type="chains" value="A/B/C=48-157"/>
</dbReference>
<dbReference type="PDB" id="1B2S">
    <property type="method" value="X-ray"/>
    <property type="resolution" value="1.82 A"/>
    <property type="chains" value="A/B/C=48-157"/>
</dbReference>
<dbReference type="PDB" id="1B2U">
    <property type="method" value="X-ray"/>
    <property type="resolution" value="2.10 A"/>
    <property type="chains" value="A/B/C=48-157"/>
</dbReference>
<dbReference type="PDB" id="1B2X">
    <property type="method" value="X-ray"/>
    <property type="resolution" value="1.80 A"/>
    <property type="chains" value="A/B/C=48-157"/>
</dbReference>
<dbReference type="PDB" id="1B2Z">
    <property type="method" value="X-ray"/>
    <property type="resolution" value="2.03 A"/>
    <property type="chains" value="A/B/C=48-157"/>
</dbReference>
<dbReference type="PDB" id="1B3S">
    <property type="method" value="X-ray"/>
    <property type="resolution" value="2.39 A"/>
    <property type="chains" value="A/B/C=48-157"/>
</dbReference>
<dbReference type="PDB" id="1BAN">
    <property type="method" value="X-ray"/>
    <property type="resolution" value="2.20 A"/>
    <property type="chains" value="A/B/C=48-157"/>
</dbReference>
<dbReference type="PDB" id="1BAO">
    <property type="method" value="X-ray"/>
    <property type="resolution" value="2.20 A"/>
    <property type="chains" value="A/B/C=48-157"/>
</dbReference>
<dbReference type="PDB" id="1BGS">
    <property type="method" value="X-ray"/>
    <property type="resolution" value="2.60 A"/>
    <property type="chains" value="A/B/C=48-157"/>
</dbReference>
<dbReference type="PDB" id="1BNE">
    <property type="method" value="X-ray"/>
    <property type="resolution" value="2.10 A"/>
    <property type="chains" value="A/B/C=48-157"/>
</dbReference>
<dbReference type="PDB" id="1BNF">
    <property type="method" value="X-ray"/>
    <property type="resolution" value="2.00 A"/>
    <property type="chains" value="A/B/C=48-157"/>
</dbReference>
<dbReference type="PDB" id="1BNG">
    <property type="method" value="X-ray"/>
    <property type="resolution" value="2.10 A"/>
    <property type="chains" value="A/B/C=48-157"/>
</dbReference>
<dbReference type="PDB" id="1BNI">
    <property type="method" value="X-ray"/>
    <property type="resolution" value="2.10 A"/>
    <property type="chains" value="A/B/C=48-157"/>
</dbReference>
<dbReference type="PDB" id="1BNJ">
    <property type="method" value="X-ray"/>
    <property type="resolution" value="2.10 A"/>
    <property type="chains" value="A/B/C=48-157"/>
</dbReference>
<dbReference type="PDB" id="1BNR">
    <property type="method" value="NMR"/>
    <property type="chains" value="A=48-157"/>
</dbReference>
<dbReference type="PDB" id="1BNS">
    <property type="method" value="X-ray"/>
    <property type="resolution" value="2.05 A"/>
    <property type="chains" value="A/B/C=48-157"/>
</dbReference>
<dbReference type="PDB" id="1BRG">
    <property type="method" value="X-ray"/>
    <property type="resolution" value="2.20 A"/>
    <property type="chains" value="A/B/C=50-157"/>
</dbReference>
<dbReference type="PDB" id="1BRH">
    <property type="method" value="X-ray"/>
    <property type="resolution" value="2.00 A"/>
    <property type="chains" value="A/B/C=48-157"/>
</dbReference>
<dbReference type="PDB" id="1BRI">
    <property type="method" value="X-ray"/>
    <property type="resolution" value="1.90 A"/>
    <property type="chains" value="A/B/C=48-157"/>
</dbReference>
<dbReference type="PDB" id="1BRJ">
    <property type="method" value="X-ray"/>
    <property type="resolution" value="2.00 A"/>
    <property type="chains" value="A/B/C=48-157"/>
</dbReference>
<dbReference type="PDB" id="1BRK">
    <property type="method" value="X-ray"/>
    <property type="resolution" value="2.00 A"/>
    <property type="chains" value="A/B/C=48-157"/>
</dbReference>
<dbReference type="PDB" id="1BRN">
    <property type="method" value="X-ray"/>
    <property type="resolution" value="1.76 A"/>
    <property type="chains" value="L/M=48-157"/>
</dbReference>
<dbReference type="PDB" id="1BRS">
    <property type="method" value="X-ray"/>
    <property type="resolution" value="2.00 A"/>
    <property type="chains" value="A/B/C=48-157"/>
</dbReference>
<dbReference type="PDB" id="1BSA">
    <property type="method" value="X-ray"/>
    <property type="resolution" value="2.00 A"/>
    <property type="chains" value="A/B/C=48-157"/>
</dbReference>
<dbReference type="PDB" id="1BSB">
    <property type="method" value="X-ray"/>
    <property type="resolution" value="2.00 A"/>
    <property type="chains" value="A/B/C=48-157"/>
</dbReference>
<dbReference type="PDB" id="1BSC">
    <property type="method" value="X-ray"/>
    <property type="resolution" value="2.00 A"/>
    <property type="chains" value="A/B/C=48-157"/>
</dbReference>
<dbReference type="PDB" id="1BSD">
    <property type="method" value="X-ray"/>
    <property type="resolution" value="2.30 A"/>
    <property type="chains" value="A/B/C=48-157"/>
</dbReference>
<dbReference type="PDB" id="1BSE">
    <property type="method" value="X-ray"/>
    <property type="resolution" value="2.00 A"/>
    <property type="chains" value="A/B/C=48-157"/>
</dbReference>
<dbReference type="PDB" id="1FW7">
    <property type="method" value="NMR"/>
    <property type="chains" value="A=48-157"/>
</dbReference>
<dbReference type="PDB" id="1RNB">
    <property type="method" value="X-ray"/>
    <property type="resolution" value="1.90 A"/>
    <property type="chains" value="A=48-157"/>
</dbReference>
<dbReference type="PDB" id="1X1U">
    <property type="method" value="X-ray"/>
    <property type="resolution" value="2.30 A"/>
    <property type="chains" value="A/B/C=48-157"/>
</dbReference>
<dbReference type="PDB" id="1X1W">
    <property type="method" value="X-ray"/>
    <property type="resolution" value="2.10 A"/>
    <property type="chains" value="A/B/C=48-157"/>
</dbReference>
<dbReference type="PDB" id="1X1X">
    <property type="method" value="X-ray"/>
    <property type="resolution" value="2.30 A"/>
    <property type="chains" value="A/B/C=48-157"/>
</dbReference>
<dbReference type="PDB" id="1X1Y">
    <property type="method" value="X-ray"/>
    <property type="resolution" value="1.90 A"/>
    <property type="chains" value="A/B/C=48-157"/>
</dbReference>
<dbReference type="PDB" id="1YVS">
    <property type="method" value="X-ray"/>
    <property type="resolution" value="2.20 A"/>
    <property type="chains" value="A=48-157"/>
</dbReference>
<dbReference type="PDB" id="2C4B">
    <property type="method" value="X-ray"/>
    <property type="resolution" value="1.30 A"/>
    <property type="chains" value="A/B=49-157"/>
</dbReference>
<dbReference type="PDB" id="2F4Y">
    <property type="method" value="X-ray"/>
    <property type="resolution" value="2.15 A"/>
    <property type="chains" value="A/B/C=50-157"/>
</dbReference>
<dbReference type="PDB" id="2F56">
    <property type="method" value="X-ray"/>
    <property type="resolution" value="1.96 A"/>
    <property type="chains" value="A/B/C=50-157"/>
</dbReference>
<dbReference type="PDB" id="2F5M">
    <property type="method" value="X-ray"/>
    <property type="resolution" value="1.95 A"/>
    <property type="chains" value="A/B/C=50-157"/>
</dbReference>
<dbReference type="PDB" id="2F5W">
    <property type="method" value="X-ray"/>
    <property type="resolution" value="2.00 A"/>
    <property type="chains" value="A/B/C=50-157"/>
</dbReference>
<dbReference type="PDB" id="2KF3">
    <property type="method" value="NMR"/>
    <property type="chains" value="A=48-157"/>
</dbReference>
<dbReference type="PDB" id="2KF4">
    <property type="method" value="NMR"/>
    <property type="chains" value="A=48-157"/>
</dbReference>
<dbReference type="PDB" id="2KF5">
    <property type="method" value="NMR"/>
    <property type="chains" value="A=48-157"/>
</dbReference>
<dbReference type="PDB" id="2KF6">
    <property type="method" value="NMR"/>
    <property type="chains" value="A=48-157"/>
</dbReference>
<dbReference type="PDB" id="2ZA4">
    <property type="method" value="X-ray"/>
    <property type="resolution" value="1.58 A"/>
    <property type="chains" value="A/C=48-157"/>
</dbReference>
<dbReference type="PDB" id="3DA7">
    <property type="method" value="X-ray"/>
    <property type="resolution" value="2.25 A"/>
    <property type="chains" value="A/B/E/G=48-113"/>
</dbReference>
<dbReference type="PDB" id="3KCH">
    <property type="method" value="X-ray"/>
    <property type="resolution" value="1.94 A"/>
    <property type="chains" value="A/B/C=48-157"/>
</dbReference>
<dbReference type="PDB" id="3Q3F">
    <property type="method" value="X-ray"/>
    <property type="resolution" value="2.17 A"/>
    <property type="chains" value="A=48-157"/>
</dbReference>
<dbReference type="PDB" id="6PQK">
    <property type="method" value="X-ray"/>
    <property type="resolution" value="1.20 A"/>
    <property type="chains" value="A/C=48-157"/>
</dbReference>
<dbReference type="PDB" id="7MRX">
    <property type="method" value="X-ray"/>
    <property type="resolution" value="2.29 A"/>
    <property type="chains" value="A/C/E=48-157"/>
</dbReference>
<dbReference type="PDBsum" id="1A2P"/>
<dbReference type="PDBsum" id="1B20"/>
<dbReference type="PDBsum" id="1B21"/>
<dbReference type="PDBsum" id="1B27"/>
<dbReference type="PDBsum" id="1B2S"/>
<dbReference type="PDBsum" id="1B2U"/>
<dbReference type="PDBsum" id="1B2X"/>
<dbReference type="PDBsum" id="1B2Z"/>
<dbReference type="PDBsum" id="1B3S"/>
<dbReference type="PDBsum" id="1BAN"/>
<dbReference type="PDBsum" id="1BAO"/>
<dbReference type="PDBsum" id="1BGS"/>
<dbReference type="PDBsum" id="1BNE"/>
<dbReference type="PDBsum" id="1BNF"/>
<dbReference type="PDBsum" id="1BNG"/>
<dbReference type="PDBsum" id="1BNI"/>
<dbReference type="PDBsum" id="1BNJ"/>
<dbReference type="PDBsum" id="1BNR"/>
<dbReference type="PDBsum" id="1BNS"/>
<dbReference type="PDBsum" id="1BRG"/>
<dbReference type="PDBsum" id="1BRH"/>
<dbReference type="PDBsum" id="1BRI"/>
<dbReference type="PDBsum" id="1BRJ"/>
<dbReference type="PDBsum" id="1BRK"/>
<dbReference type="PDBsum" id="1BRN"/>
<dbReference type="PDBsum" id="1BRS"/>
<dbReference type="PDBsum" id="1BSA"/>
<dbReference type="PDBsum" id="1BSB"/>
<dbReference type="PDBsum" id="1BSC"/>
<dbReference type="PDBsum" id="1BSD"/>
<dbReference type="PDBsum" id="1BSE"/>
<dbReference type="PDBsum" id="1FW7"/>
<dbReference type="PDBsum" id="1RNB"/>
<dbReference type="PDBsum" id="1X1U"/>
<dbReference type="PDBsum" id="1X1W"/>
<dbReference type="PDBsum" id="1X1X"/>
<dbReference type="PDBsum" id="1X1Y"/>
<dbReference type="PDBsum" id="1YVS"/>
<dbReference type="PDBsum" id="2C4B"/>
<dbReference type="PDBsum" id="2F4Y"/>
<dbReference type="PDBsum" id="2F56"/>
<dbReference type="PDBsum" id="2F5M"/>
<dbReference type="PDBsum" id="2F5W"/>
<dbReference type="PDBsum" id="2KF3"/>
<dbReference type="PDBsum" id="2KF4"/>
<dbReference type="PDBsum" id="2KF5"/>
<dbReference type="PDBsum" id="2KF6"/>
<dbReference type="PDBsum" id="2ZA4"/>
<dbReference type="PDBsum" id="3DA7"/>
<dbReference type="PDBsum" id="3KCH"/>
<dbReference type="PDBsum" id="3Q3F"/>
<dbReference type="PDBsum" id="6PQK"/>
<dbReference type="PDBsum" id="7MRX"/>
<dbReference type="BMRB" id="P00648"/>
<dbReference type="SMR" id="P00648"/>
<dbReference type="DIP" id="DIP-544N"/>
<dbReference type="IntAct" id="P00648">
    <property type="interactions" value="1"/>
</dbReference>
<dbReference type="STRING" id="692420.BAMF_3319"/>
<dbReference type="eggNOG" id="COG4290">
    <property type="taxonomic scope" value="Bacteria"/>
</dbReference>
<dbReference type="BRENDA" id="4.6.1.24">
    <property type="organism ID" value="630"/>
</dbReference>
<dbReference type="EvolutionaryTrace" id="P00648"/>
<dbReference type="GO" id="GO:0005576">
    <property type="term" value="C:extracellular region"/>
    <property type="evidence" value="ECO:0007669"/>
    <property type="project" value="UniProtKB-SubCell"/>
</dbReference>
<dbReference type="GO" id="GO:0003723">
    <property type="term" value="F:RNA binding"/>
    <property type="evidence" value="ECO:0007669"/>
    <property type="project" value="InterPro"/>
</dbReference>
<dbReference type="GO" id="GO:0004521">
    <property type="term" value="F:RNA endonuclease activity"/>
    <property type="evidence" value="ECO:0007669"/>
    <property type="project" value="InterPro"/>
</dbReference>
<dbReference type="CDD" id="cd00933">
    <property type="entry name" value="barnase"/>
    <property type="match status" value="1"/>
</dbReference>
<dbReference type="Gene3D" id="3.40.20.20">
    <property type="match status" value="2"/>
</dbReference>
<dbReference type="InterPro" id="IPR001887">
    <property type="entry name" value="Barnase"/>
</dbReference>
<dbReference type="InterPro" id="IPR000026">
    <property type="entry name" value="N1-like"/>
</dbReference>
<dbReference type="InterPro" id="IPR016191">
    <property type="entry name" value="Ribonuclease/ribotoxin"/>
</dbReference>
<dbReference type="InterPro" id="IPR053753">
    <property type="entry name" value="RNase_N1/T1-like_sf"/>
</dbReference>
<dbReference type="Pfam" id="PF00545">
    <property type="entry name" value="Ribonuclease"/>
    <property type="match status" value="1"/>
</dbReference>
<dbReference type="PIRSF" id="PIRSF001013">
    <property type="entry name" value="Barnase"/>
    <property type="match status" value="1"/>
</dbReference>
<dbReference type="PRINTS" id="PR00117">
    <property type="entry name" value="BARNASE"/>
</dbReference>
<dbReference type="SUPFAM" id="SSF53933">
    <property type="entry name" value="Microbial ribonucleases"/>
    <property type="match status" value="1"/>
</dbReference>
<comment type="function">
    <text>Hydrolyzes phosphodiester bonds in RNA, poly- and oligoribonucleotides resulting in 3'-nucleoside monophosphates via 2',3'-cyclophosphate intermediates.</text>
</comment>
<comment type="subcellular location">
    <subcellularLocation>
        <location>Secreted</location>
    </subcellularLocation>
</comment>
<comment type="biotechnology">
    <text>Introduced by genetic manipulation and expressed in male sterile maize and rape by Plant Genetic Systems and in radicchio rosso by Bejo Zaden. Barnase expressed in transgenic plants will specifically destroy the tissue(s) where it is expressed. After cell transformation, protein expression and plant regeneration, the active nuclease destroys the pollen producing organs thus rendering the plant sterile.</text>
</comment>
<comment type="similarity">
    <text evidence="2">Belongs to the ribonuclease N1/T1 family.</text>
</comment>
<evidence type="ECO:0000269" key="1">
    <source>
    </source>
</evidence>
<evidence type="ECO:0000305" key="2"/>
<evidence type="ECO:0007829" key="3">
    <source>
        <dbReference type="PDB" id="3DA7"/>
    </source>
</evidence>
<evidence type="ECO:0007829" key="4">
    <source>
        <dbReference type="PDB" id="6PQK"/>
    </source>
</evidence>
<proteinExistence type="evidence at protein level"/>
<feature type="signal peptide">
    <location>
        <begin position="1"/>
        <end position="34"/>
    </location>
</feature>
<feature type="propeptide" id="PRO_0000030828" evidence="1">
    <location>
        <begin position="35"/>
        <end position="47"/>
    </location>
</feature>
<feature type="chain" id="PRO_0000030829" description="Ribonuclease" evidence="1">
    <location>
        <begin position="48"/>
        <end position="157"/>
    </location>
</feature>
<feature type="active site" description="Proton acceptor">
    <location>
        <position position="120"/>
    </location>
</feature>
<feature type="active site" description="Proton donor">
    <location>
        <position position="149"/>
    </location>
</feature>
<feature type="mutagenesis site" description="Loss of activity.">
    <original>H</original>
    <variation>Q</variation>
    <location>
        <position position="149"/>
    </location>
</feature>
<feature type="strand" evidence="3">
    <location>
        <begin position="22"/>
        <end position="25"/>
    </location>
</feature>
<feature type="strand" evidence="3">
    <location>
        <begin position="30"/>
        <end position="35"/>
    </location>
</feature>
<feature type="helix" evidence="4">
    <location>
        <begin position="54"/>
        <end position="64"/>
    </location>
</feature>
<feature type="helix" evidence="4">
    <location>
        <begin position="74"/>
        <end position="79"/>
    </location>
</feature>
<feature type="helix" evidence="4">
    <location>
        <begin position="84"/>
        <end position="86"/>
    </location>
</feature>
<feature type="helix" evidence="4">
    <location>
        <begin position="89"/>
        <end position="92"/>
    </location>
</feature>
<feature type="strand" evidence="4">
    <location>
        <begin position="97"/>
        <end position="103"/>
    </location>
</feature>
<feature type="strand" evidence="4">
    <location>
        <begin position="118"/>
        <end position="122"/>
    </location>
</feature>
<feature type="strand" evidence="4">
    <location>
        <begin position="127"/>
        <end position="129"/>
    </location>
</feature>
<feature type="strand" evidence="4">
    <location>
        <begin position="134"/>
        <end position="138"/>
    </location>
</feature>
<feature type="strand" evidence="4">
    <location>
        <begin position="143"/>
        <end position="148"/>
    </location>
</feature>
<feature type="strand" evidence="4">
    <location>
        <begin position="154"/>
        <end position="157"/>
    </location>
</feature>
<name>RNBR_BACAM</name>
<protein>
    <recommendedName>
        <fullName>Ribonuclease</fullName>
        <ecNumber>3.1.27.-</ecNumber>
    </recommendedName>
    <alternativeName>
        <fullName>Barnase</fullName>
    </alternativeName>
    <alternativeName>
        <fullName>RNase Ba</fullName>
    </alternativeName>
</protein>
<sequence length="157" mass="17473">MMKMEGIALKKRLSWISVCLLVLVSAAGMLFSTAAKTETSSHKAHTEAQVINTFDGVADYLQTYHKLPDNYITKSEAQALGWVASKGNLADVAPGKSIGGDIFSNREGKLPGKSGRTWREADINYTSGFRNSDRILYSSDWLIYKTTDHYQTFTKIR</sequence>
<accession>P00648</accession>
<keyword id="KW-0002">3D-structure</keyword>
<keyword id="KW-0903">Direct protein sequencing</keyword>
<keyword id="KW-0255">Endonuclease</keyword>
<keyword id="KW-0308">Genetically modified food</keyword>
<keyword id="KW-0378">Hydrolase</keyword>
<keyword id="KW-0540">Nuclease</keyword>
<keyword id="KW-0964">Secreted</keyword>
<keyword id="KW-0732">Signal</keyword>
<organism>
    <name type="scientific">Bacillus amyloliquefaciens</name>
    <name type="common">Bacillus velezensis</name>
    <dbReference type="NCBI Taxonomy" id="1390"/>
    <lineage>
        <taxon>Bacteria</taxon>
        <taxon>Bacillati</taxon>
        <taxon>Bacillota</taxon>
        <taxon>Bacilli</taxon>
        <taxon>Bacillales</taxon>
        <taxon>Bacillaceae</taxon>
        <taxon>Bacillus</taxon>
        <taxon>Bacillus amyloliquefaciens group</taxon>
    </lineage>
</organism>